<name>FLAG_METJA</name>
<reference key="1">
    <citation type="journal article" date="1996" name="Science">
        <title>Complete genome sequence of the methanogenic archaeon, Methanococcus jannaschii.</title>
        <authorList>
            <person name="Bult C.J."/>
            <person name="White O."/>
            <person name="Olsen G.J."/>
            <person name="Zhou L."/>
            <person name="Fleischmann R.D."/>
            <person name="Sutton G.G."/>
            <person name="Blake J.A."/>
            <person name="FitzGerald L.M."/>
            <person name="Clayton R.A."/>
            <person name="Gocayne J.D."/>
            <person name="Kerlavage A.R."/>
            <person name="Dougherty B.A."/>
            <person name="Tomb J.-F."/>
            <person name="Adams M.D."/>
            <person name="Reich C.I."/>
            <person name="Overbeek R."/>
            <person name="Kirkness E.F."/>
            <person name="Weinstock K.G."/>
            <person name="Merrick J.M."/>
            <person name="Glodek A."/>
            <person name="Scott J.L."/>
            <person name="Geoghagen N.S.M."/>
            <person name="Weidman J.F."/>
            <person name="Fuhrmann J.L."/>
            <person name="Nguyen D."/>
            <person name="Utterback T.R."/>
            <person name="Kelley J.M."/>
            <person name="Peterson J.D."/>
            <person name="Sadow P.W."/>
            <person name="Hanna M.C."/>
            <person name="Cotton M.D."/>
            <person name="Roberts K.M."/>
            <person name="Hurst M.A."/>
            <person name="Kaine B.P."/>
            <person name="Borodovsky M."/>
            <person name="Klenk H.-P."/>
            <person name="Fraser C.M."/>
            <person name="Smith H.O."/>
            <person name="Woese C.R."/>
            <person name="Venter J.C."/>
        </authorList>
    </citation>
    <scope>NUCLEOTIDE SEQUENCE [LARGE SCALE GENOMIC DNA]</scope>
    <source>
        <strain>ATCC 43067 / DSM 2661 / JAL-1 / JCM 10045 / NBRC 100440</strain>
    </source>
</reference>
<evidence type="ECO:0000255" key="1"/>
<evidence type="ECO:0000305" key="2"/>
<gene>
    <name type="primary">flaG</name>
    <name type="ordered locus">MJ0898</name>
</gene>
<sequence length="154" mass="16537">MIYLASSAMSEIVMFVAVLLIAAFVAGILTTSTYKISLNINKKGDALATKLSQDFEIINDPGDIVRNSSAGTIALYIKNTGKDPIIFTNDSFTVIIDGSIVEINTTNQLTSPGSNILSPGDVGEIVVNYNETGYHRIKVISECGISRIIRGYIS</sequence>
<protein>
    <recommendedName>
        <fullName>Putative flagella-related protein G</fullName>
    </recommendedName>
</protein>
<dbReference type="EMBL" id="L77117">
    <property type="protein sequence ID" value="AAB98901.1"/>
    <property type="molecule type" value="Genomic_DNA"/>
</dbReference>
<dbReference type="PIR" id="B64412">
    <property type="entry name" value="B64412"/>
</dbReference>
<dbReference type="SMR" id="Q58308"/>
<dbReference type="STRING" id="243232.MJ_0898"/>
<dbReference type="PaxDb" id="243232-MJ_0898"/>
<dbReference type="EnsemblBacteria" id="AAB98901">
    <property type="protein sequence ID" value="AAB98901"/>
    <property type="gene ID" value="MJ_0898"/>
</dbReference>
<dbReference type="KEGG" id="mja:MJ_0898"/>
<dbReference type="eggNOG" id="arCOG01822">
    <property type="taxonomic scope" value="Archaea"/>
</dbReference>
<dbReference type="HOGENOM" id="CLU_134827_1_0_2"/>
<dbReference type="InParanoid" id="Q58308"/>
<dbReference type="PhylomeDB" id="Q58308"/>
<dbReference type="Proteomes" id="UP000000805">
    <property type="component" value="Chromosome"/>
</dbReference>
<dbReference type="GO" id="GO:0097589">
    <property type="term" value="C:archaeal-type flagellum"/>
    <property type="evidence" value="ECO:0007669"/>
    <property type="project" value="UniProtKB-SubCell"/>
</dbReference>
<dbReference type="GO" id="GO:0005886">
    <property type="term" value="C:plasma membrane"/>
    <property type="evidence" value="ECO:0007669"/>
    <property type="project" value="UniProtKB-SubCell"/>
</dbReference>
<dbReference type="GO" id="GO:0005198">
    <property type="term" value="F:structural molecule activity"/>
    <property type="evidence" value="ECO:0007669"/>
    <property type="project" value="InterPro"/>
</dbReference>
<dbReference type="GO" id="GO:0097588">
    <property type="term" value="P:archaeal or bacterial-type flagellum-dependent cell motility"/>
    <property type="evidence" value="ECO:0007669"/>
    <property type="project" value="InterPro"/>
</dbReference>
<dbReference type="InterPro" id="IPR002774">
    <property type="entry name" value="Flagellin_arc"/>
</dbReference>
<dbReference type="PANTHER" id="PTHR42200">
    <property type="entry name" value="ARCHAEAL FLAGELLA-RELATED PROTEIN F-RELATED"/>
    <property type="match status" value="1"/>
</dbReference>
<dbReference type="PANTHER" id="PTHR42200:SF1">
    <property type="entry name" value="FLAGELLA-RELATED PROTEIN G-RELATED"/>
    <property type="match status" value="1"/>
</dbReference>
<dbReference type="Pfam" id="PF01917">
    <property type="entry name" value="Arch_flagellin"/>
    <property type="match status" value="1"/>
</dbReference>
<accession>Q58308</accession>
<feature type="chain" id="PRO_0000087273" description="Putative flagella-related protein G">
    <location>
        <begin position="1"/>
        <end position="154"/>
    </location>
</feature>
<feature type="transmembrane region" description="Helical" evidence="1">
    <location>
        <begin position="9"/>
        <end position="29"/>
    </location>
</feature>
<organism>
    <name type="scientific">Methanocaldococcus jannaschii (strain ATCC 43067 / DSM 2661 / JAL-1 / JCM 10045 / NBRC 100440)</name>
    <name type="common">Methanococcus jannaschii</name>
    <dbReference type="NCBI Taxonomy" id="243232"/>
    <lineage>
        <taxon>Archaea</taxon>
        <taxon>Methanobacteriati</taxon>
        <taxon>Methanobacteriota</taxon>
        <taxon>Methanomada group</taxon>
        <taxon>Methanococci</taxon>
        <taxon>Methanococcales</taxon>
        <taxon>Methanocaldococcaceae</taxon>
        <taxon>Methanocaldococcus</taxon>
    </lineage>
</organism>
<proteinExistence type="inferred from homology"/>
<keyword id="KW-0974">Archaeal flagellum</keyword>
<keyword id="KW-1003">Cell membrane</keyword>
<keyword id="KW-0472">Membrane</keyword>
<keyword id="KW-1185">Reference proteome</keyword>
<keyword id="KW-0812">Transmembrane</keyword>
<keyword id="KW-1133">Transmembrane helix</keyword>
<comment type="subcellular location">
    <subcellularLocation>
        <location evidence="2">Cell membrane</location>
        <topology evidence="2">Single-pass membrane protein</topology>
    </subcellularLocation>
    <subcellularLocation>
        <location evidence="2">Archaeal flagellum</location>
    </subcellularLocation>
</comment>
<comment type="similarity">
    <text evidence="2">Belongs to the archaeal FlaG family.</text>
</comment>